<keyword id="KW-1185">Reference proteome</keyword>
<keyword id="KW-0694">RNA-binding</keyword>
<keyword id="KW-0804">Transcription</keyword>
<keyword id="KW-0889">Transcription antitermination</keyword>
<keyword id="KW-0805">Transcription regulation</keyword>
<protein>
    <recommendedName>
        <fullName evidence="1">Transcription antitermination protein NusB</fullName>
    </recommendedName>
    <alternativeName>
        <fullName evidence="1">Antitermination factor NusB</fullName>
    </alternativeName>
</protein>
<proteinExistence type="inferred from homology"/>
<reference key="1">
    <citation type="journal article" date="2009" name="Appl. Environ. Microbiol.">
        <title>Genomic analysis of 'Elusimicrobium minutum,' the first cultivated representative of the phylum 'Elusimicrobia' (formerly termite group 1).</title>
        <authorList>
            <person name="Herlemann D.P.R."/>
            <person name="Geissinger O."/>
            <person name="Ikeda-Ohtsubo W."/>
            <person name="Kunin V."/>
            <person name="Sun H."/>
            <person name="Lapidus A."/>
            <person name="Hugenholtz P."/>
            <person name="Brune A."/>
        </authorList>
    </citation>
    <scope>NUCLEOTIDE SEQUENCE [LARGE SCALE GENOMIC DNA]</scope>
    <source>
        <strain>Pei191</strain>
    </source>
</reference>
<name>NUSB_ELUMP</name>
<feature type="chain" id="PRO_1000192438" description="Transcription antitermination protein NusB">
    <location>
        <begin position="1"/>
        <end position="140"/>
    </location>
</feature>
<sequence length="140" mass="15812">MGNRRLAREHALQTLYYADTGKTQGKDINEYKEDFKDSLDAAGFEFCSGIIDGALEHQAELDKIISAYAKNWSLNRMSVVDRSILRMAAYEMLFSPENTPVAAVIDEAIELAKKFSTENSSRFINGLLDQIKKERKNGQN</sequence>
<dbReference type="EMBL" id="CP001055">
    <property type="protein sequence ID" value="ACC98778.1"/>
    <property type="molecule type" value="Genomic_DNA"/>
</dbReference>
<dbReference type="RefSeq" id="WP_012415393.1">
    <property type="nucleotide sequence ID" value="NC_010644.1"/>
</dbReference>
<dbReference type="SMR" id="B2KE32"/>
<dbReference type="STRING" id="445932.Emin_1228"/>
<dbReference type="KEGG" id="emi:Emin_1228"/>
<dbReference type="HOGENOM" id="CLU_087843_3_3_0"/>
<dbReference type="OrthoDB" id="9811381at2"/>
<dbReference type="Proteomes" id="UP000001029">
    <property type="component" value="Chromosome"/>
</dbReference>
<dbReference type="GO" id="GO:0005829">
    <property type="term" value="C:cytosol"/>
    <property type="evidence" value="ECO:0007669"/>
    <property type="project" value="TreeGrafter"/>
</dbReference>
<dbReference type="GO" id="GO:0003723">
    <property type="term" value="F:RNA binding"/>
    <property type="evidence" value="ECO:0007669"/>
    <property type="project" value="UniProtKB-UniRule"/>
</dbReference>
<dbReference type="GO" id="GO:0006353">
    <property type="term" value="P:DNA-templated transcription termination"/>
    <property type="evidence" value="ECO:0007669"/>
    <property type="project" value="UniProtKB-UniRule"/>
</dbReference>
<dbReference type="GO" id="GO:0031564">
    <property type="term" value="P:transcription antitermination"/>
    <property type="evidence" value="ECO:0007669"/>
    <property type="project" value="UniProtKB-KW"/>
</dbReference>
<dbReference type="CDD" id="cd00619">
    <property type="entry name" value="Terminator_NusB"/>
    <property type="match status" value="1"/>
</dbReference>
<dbReference type="Gene3D" id="1.10.940.10">
    <property type="entry name" value="NusB-like"/>
    <property type="match status" value="1"/>
</dbReference>
<dbReference type="HAMAP" id="MF_00073">
    <property type="entry name" value="NusB"/>
    <property type="match status" value="1"/>
</dbReference>
<dbReference type="InterPro" id="IPR035926">
    <property type="entry name" value="NusB-like_sf"/>
</dbReference>
<dbReference type="InterPro" id="IPR011605">
    <property type="entry name" value="NusB_fam"/>
</dbReference>
<dbReference type="InterPro" id="IPR006027">
    <property type="entry name" value="NusB_RsmB_TIM44"/>
</dbReference>
<dbReference type="NCBIfam" id="TIGR01951">
    <property type="entry name" value="nusB"/>
    <property type="match status" value="1"/>
</dbReference>
<dbReference type="PANTHER" id="PTHR11078:SF3">
    <property type="entry name" value="ANTITERMINATION NUSB DOMAIN-CONTAINING PROTEIN"/>
    <property type="match status" value="1"/>
</dbReference>
<dbReference type="PANTHER" id="PTHR11078">
    <property type="entry name" value="N UTILIZATION SUBSTANCE PROTEIN B-RELATED"/>
    <property type="match status" value="1"/>
</dbReference>
<dbReference type="Pfam" id="PF01029">
    <property type="entry name" value="NusB"/>
    <property type="match status" value="1"/>
</dbReference>
<dbReference type="SUPFAM" id="SSF48013">
    <property type="entry name" value="NusB-like"/>
    <property type="match status" value="1"/>
</dbReference>
<accession>B2KE32</accession>
<gene>
    <name evidence="1" type="primary">nusB</name>
    <name type="ordered locus">Emin_1228</name>
</gene>
<organism>
    <name type="scientific">Elusimicrobium minutum (strain Pei191)</name>
    <dbReference type="NCBI Taxonomy" id="445932"/>
    <lineage>
        <taxon>Bacteria</taxon>
        <taxon>Pseudomonadati</taxon>
        <taxon>Elusimicrobiota</taxon>
        <taxon>Elusimicrobia</taxon>
        <taxon>Elusimicrobiales</taxon>
        <taxon>Elusimicrobiaceae</taxon>
        <taxon>Elusimicrobium</taxon>
    </lineage>
</organism>
<evidence type="ECO:0000255" key="1">
    <source>
        <dbReference type="HAMAP-Rule" id="MF_00073"/>
    </source>
</evidence>
<comment type="function">
    <text evidence="1">Involved in transcription antitermination. Required for transcription of ribosomal RNA (rRNA) genes. Binds specifically to the boxA antiterminator sequence of the ribosomal RNA (rrn) operons.</text>
</comment>
<comment type="similarity">
    <text evidence="1">Belongs to the NusB family.</text>
</comment>